<accession>P24251</accession>
<accession>P77629</accession>
<accession>Q47242</accession>
<accession>Q47585</accession>
<reference key="1">
    <citation type="journal article" date="1983" name="J. Mol. Biol.">
        <title>Complete nucleotide sequence of phoE, the structural gene for the phosphate limitation inducible outer membrane pore protein of Escherichia coli K12.</title>
        <authorList>
            <person name="Overbeeke N."/>
            <person name="Bergmans H."/>
            <person name="van Mansfeld F."/>
            <person name="Lugtenberg B."/>
        </authorList>
    </citation>
    <scope>NUCLEOTIDE SEQUENCE [GENOMIC DNA]</scope>
    <source>
        <strain>K12</strain>
    </source>
</reference>
<reference key="2">
    <citation type="journal article" date="1989" name="Nature">
        <title>Fibronectin binding mediated by a novel class of surface organelles on Escherichia coli.</title>
        <authorList>
            <person name="Olsen A."/>
            <person name="Jonsson A."/>
            <person name="Normark S."/>
        </authorList>
    </citation>
    <scope>NUCLEOTIDE SEQUENCE [GENOMIC DNA]</scope>
    <scope>PROTEIN SEQUENCE OF 2-6</scope>
    <scope>CHARACTERIZATION</scope>
    <source>
        <strain>AO12</strain>
    </source>
</reference>
<reference key="3">
    <citation type="journal article" date="1992" name="Mol. Microbiol.">
        <title>The Crl protein activates cryptic genes for curli formation and fibronectin binding in Escherichia coli HB101.</title>
        <authorList>
            <person name="Arnqvist A."/>
            <person name="Olsen A."/>
            <person name="Pfeifer J."/>
            <person name="Russell D.G."/>
            <person name="Normark S."/>
        </authorList>
    </citation>
    <scope>NUCLEOTIDE SEQUENCE [GENOMIC DNA]</scope>
    <scope>FUNCTION</scope>
    <source>
        <strain>AO12</strain>
    </source>
</reference>
<reference key="4">
    <citation type="submission" date="1996-02" db="EMBL/GenBank/DDBJ databases">
        <title>Systematic sequencing of the Escherichia coli genome: analysis of the 4.0 - 6.0 min (189,987 - 281,416bp) region.</title>
        <authorList>
            <person name="Takemoto K."/>
            <person name="Mori H."/>
            <person name="Murayama N."/>
            <person name="Kataoka K."/>
            <person name="Yano M."/>
            <person name="Itoh T."/>
            <person name="Yamamoto Y."/>
            <person name="Inokuchi H."/>
            <person name="Miki T."/>
            <person name="Hatada E."/>
            <person name="Fukuda R."/>
            <person name="Ichihara S."/>
            <person name="Mizuno T."/>
            <person name="Makino K."/>
            <person name="Nakata A."/>
            <person name="Yura T."/>
            <person name="Sampei G."/>
            <person name="Mizobuchi K."/>
        </authorList>
    </citation>
    <scope>NUCLEOTIDE SEQUENCE [LARGE SCALE GENOMIC DNA]</scope>
    <source>
        <strain>K12 / W3110 / ATCC 27325 / DSM 5911</strain>
    </source>
</reference>
<reference key="5">
    <citation type="submission" date="1997-01" db="EMBL/GenBank/DDBJ databases">
        <title>Sequence of minutes 4-25 of Escherichia coli.</title>
        <authorList>
            <person name="Chung E."/>
            <person name="Allen E."/>
            <person name="Araujo R."/>
            <person name="Aparicio A.M."/>
            <person name="Davis K."/>
            <person name="Duncan M."/>
            <person name="Federspiel N."/>
            <person name="Hyman R."/>
            <person name="Kalman S."/>
            <person name="Komp C."/>
            <person name="Kurdi O."/>
            <person name="Lew H."/>
            <person name="Lin D."/>
            <person name="Namath A."/>
            <person name="Oefner P."/>
            <person name="Roberts D."/>
            <person name="Schramm S."/>
            <person name="Davis R.W."/>
        </authorList>
    </citation>
    <scope>NUCLEOTIDE SEQUENCE [LARGE SCALE GENOMIC DNA]</scope>
    <source>
        <strain>K12 / MG1655 / ATCC 47076</strain>
    </source>
</reference>
<reference key="6">
    <citation type="journal article" date="1997" name="Science">
        <title>The complete genome sequence of Escherichia coli K-12.</title>
        <authorList>
            <person name="Blattner F.R."/>
            <person name="Plunkett G. III"/>
            <person name="Bloch C.A."/>
            <person name="Perna N.T."/>
            <person name="Burland V."/>
            <person name="Riley M."/>
            <person name="Collado-Vides J."/>
            <person name="Glasner J.D."/>
            <person name="Rode C.K."/>
            <person name="Mayhew G.F."/>
            <person name="Gregor J."/>
            <person name="Davis N.W."/>
            <person name="Kirkpatrick H.A."/>
            <person name="Goeden M.A."/>
            <person name="Rose D.J."/>
            <person name="Mau B."/>
            <person name="Shao Y."/>
        </authorList>
    </citation>
    <scope>NUCLEOTIDE SEQUENCE [LARGE SCALE GENOMIC DNA]</scope>
    <source>
        <strain>K12 / MG1655 / ATCC 47076</strain>
    </source>
</reference>
<reference key="7">
    <citation type="journal article" date="2012" name="J. Bacteriol.">
        <title>Newly identified genetic variations in common Escherichia coli MG1655 stock cultures.</title>
        <authorList>
            <person name="Freddolino P.L."/>
            <person name="Amini S."/>
            <person name="Tavazoie S."/>
        </authorList>
    </citation>
    <scope>SEQUENCE REVISION</scope>
    <source>
        <strain>K12 / MG1655 / ATCC 700926</strain>
    </source>
</reference>
<reference key="8">
    <citation type="journal article" date="2006" name="Mol. Syst. Biol.">
        <title>Highly accurate genome sequences of Escherichia coli K-12 strains MG1655 and W3110.</title>
        <authorList>
            <person name="Hayashi K."/>
            <person name="Morooka N."/>
            <person name="Yamamoto Y."/>
            <person name="Fujita K."/>
            <person name="Isono K."/>
            <person name="Choi S."/>
            <person name="Ohtsubo E."/>
            <person name="Baba T."/>
            <person name="Wanner B.L."/>
            <person name="Mori H."/>
            <person name="Horiuchi T."/>
        </authorList>
    </citation>
    <scope>NUCLEOTIDE SEQUENCE [LARGE SCALE GENOMIC DNA]</scope>
    <scope>SEQUENCE REVISION TO 28</scope>
    <source>
        <strain>K12 / W3110 / ATCC 27325 / DSM 5911</strain>
    </source>
</reference>
<reference key="9">
    <citation type="journal article" date="1984" name="Gene">
        <title>Structural and functional organization of the gpt gene region of Escherichia coli.</title>
        <authorList>
            <person name="Nueesch J."/>
            <person name="Schuemperli D."/>
        </authorList>
    </citation>
    <scope>NUCLEOTIDE SEQUENCE [GENOMIC DNA] OF 1-32</scope>
</reference>
<reference key="10">
    <citation type="journal article" date="1992" name="J. Bacteriol.">
        <title>The rcsA gene of Escherichia coli 09:K30:H12 is involved in the expression of the serotype-specific group I K (capsular) antigen.</title>
        <authorList>
            <person name="Keenleyside W.J."/>
            <person name="Jayaratne P."/>
            <person name="MacLachlan P.R."/>
            <person name="Whitfield C."/>
        </authorList>
    </citation>
    <scope>NUCLEOTIDE SEQUENCE [GENOMIC DNA] OF 1-32</scope>
    <source>
        <strain>O9:K30:H12</strain>
    </source>
</reference>
<reference key="11">
    <citation type="journal article" date="1998" name="Mol. Microbiol.">
        <title>Crl stimulates RpoS activity during stationary phase.</title>
        <authorList>
            <person name="Pratt L.A."/>
            <person name="Silhavy T.J."/>
        </authorList>
    </citation>
    <scope>ACTIVATION OF RPOS ACTIVITY</scope>
    <source>
        <strain>K12 / MC4100 / ATCC 35695 / DSM 6574</strain>
    </source>
</reference>
<reference key="12">
    <citation type="journal article" date="2004" name="J. Biol. Chem.">
        <title>Crl, a low temperature-induced protein in Escherichia coli that binds directly to the stationary phase sigma subunit of RNA polymerase.</title>
        <authorList>
            <person name="Bougdour A."/>
            <person name="Lelong C."/>
            <person name="Geiselmann J."/>
        </authorList>
    </citation>
    <scope>BINDING TO SIGMA-SUBUNIT OF RNA POLYMERASE</scope>
    <source>
        <strain>K12 / W3110 / ATCC 27325 / DSM 5911</strain>
    </source>
</reference>
<reference key="13">
    <citation type="journal article" date="2006" name="J. Bacteriol.">
        <title>Crl facilitates RNA polymerase holoenzyme formation.</title>
        <authorList>
            <person name="Gaal T."/>
            <person name="Mandel M.J."/>
            <person name="Silhavy T.J."/>
            <person name="Gourse R.L."/>
        </authorList>
    </citation>
    <scope>ROLE IN RNA POLYMERASE HOLOENZYME FORMATION</scope>
</reference>
<evidence type="ECO:0000255" key="1"/>
<evidence type="ECO:0000269" key="2">
    <source>
    </source>
</evidence>
<evidence type="ECO:0000269" key="3">
    <source>
    </source>
</evidence>
<evidence type="ECO:0000269" key="4">
    <source>
    </source>
</evidence>
<evidence type="ECO:0000305" key="5"/>
<evidence type="ECO:0000305" key="6">
    <source>
    </source>
</evidence>
<protein>
    <recommendedName>
        <fullName>Sigma factor-binding protein Crl</fullName>
    </recommendedName>
    <alternativeName>
        <fullName>Curlin genes transcriptional activatory protein</fullName>
    </alternativeName>
</protein>
<dbReference type="EMBL" id="V00316">
    <property type="protein sequence ID" value="CAA23606.1"/>
    <property type="molecule type" value="Genomic_DNA"/>
</dbReference>
<dbReference type="EMBL" id="X67207">
    <property type="protein sequence ID" value="CAA47646.1"/>
    <property type="molecule type" value="Genomic_DNA"/>
</dbReference>
<dbReference type="EMBL" id="U70214">
    <property type="protein sequence ID" value="AAB08660.1"/>
    <property type="molecule type" value="Genomic_DNA"/>
</dbReference>
<dbReference type="EMBL" id="U00096">
    <property type="status" value="NOT_ANNOTATED_CDS"/>
    <property type="molecule type" value="Genomic_DNA"/>
</dbReference>
<dbReference type="EMBL" id="AP009048">
    <property type="protein sequence ID" value="BAA77909.2"/>
    <property type="molecule type" value="Genomic_DNA"/>
</dbReference>
<dbReference type="EMBL" id="M13422">
    <property type="protein sequence ID" value="AAA23930.1"/>
    <property type="molecule type" value="Genomic_DNA"/>
</dbReference>
<dbReference type="PIR" id="A64749">
    <property type="entry name" value="A64749"/>
</dbReference>
<dbReference type="RefSeq" id="WP_000174689.1">
    <property type="nucleotide sequence ID" value="NZ_LN832404.1"/>
</dbReference>
<dbReference type="PDB" id="6KJ6">
    <property type="method" value="EM"/>
    <property type="resolution" value="3.80 A"/>
    <property type="chains" value="J=1-133"/>
</dbReference>
<dbReference type="PDBsum" id="6KJ6"/>
<dbReference type="SMR" id="P24251"/>
<dbReference type="BioGRID" id="4260821">
    <property type="interactions" value="142"/>
</dbReference>
<dbReference type="FunCoup" id="P24251">
    <property type="interactions" value="145"/>
</dbReference>
<dbReference type="IntAct" id="P24251">
    <property type="interactions" value="11"/>
</dbReference>
<dbReference type="jPOST" id="P24251"/>
<dbReference type="KEGG" id="ecj:JW0230"/>
<dbReference type="KEGG" id="ecoc:C3026_01140"/>
<dbReference type="KEGG" id="ecoc:C3026_23875"/>
<dbReference type="PATRIC" id="fig|1411691.4.peg.2043"/>
<dbReference type="EchoBASE" id="EB1084"/>
<dbReference type="eggNOG" id="ENOG502ZQ8E">
    <property type="taxonomic scope" value="Bacteria"/>
</dbReference>
<dbReference type="HOGENOM" id="CLU_136773_0_0_6"/>
<dbReference type="InParanoid" id="P24251"/>
<dbReference type="OMA" id="FWGWWLE"/>
<dbReference type="OrthoDB" id="6428303at2"/>
<dbReference type="PhylomeDB" id="P24251"/>
<dbReference type="PRO" id="PR:P24251"/>
<dbReference type="Proteomes" id="UP000000625">
    <property type="component" value="Chromosome"/>
</dbReference>
<dbReference type="GO" id="GO:0005829">
    <property type="term" value="C:cytosol"/>
    <property type="evidence" value="ECO:0000314"/>
    <property type="project" value="EcoCyc"/>
</dbReference>
<dbReference type="GO" id="GO:0045893">
    <property type="term" value="P:positive regulation of DNA-templated transcription"/>
    <property type="evidence" value="ECO:0000314"/>
    <property type="project" value="EcoCyc"/>
</dbReference>
<dbReference type="GO" id="GO:2000144">
    <property type="term" value="P:positive regulation of DNA-templated transcription initiation"/>
    <property type="evidence" value="ECO:0000314"/>
    <property type="project" value="EcoCyc"/>
</dbReference>
<dbReference type="GO" id="GO:0065003">
    <property type="term" value="P:protein-containing complex assembly"/>
    <property type="evidence" value="ECO:0000314"/>
    <property type="project" value="EcoCyc"/>
</dbReference>
<dbReference type="FunFam" id="3.30.310.230:FF:000001">
    <property type="entry name" value="Sigma factor-binding protein Crl"/>
    <property type="match status" value="1"/>
</dbReference>
<dbReference type="Gene3D" id="3.30.310.230">
    <property type="entry name" value="Sigma factor-binding protein Crl monomer"/>
    <property type="match status" value="1"/>
</dbReference>
<dbReference type="HAMAP" id="MF_01178">
    <property type="entry name" value="Crl"/>
    <property type="match status" value="1"/>
</dbReference>
<dbReference type="InterPro" id="IPR009986">
    <property type="entry name" value="Tscrpt_reg_Crl"/>
</dbReference>
<dbReference type="InterPro" id="IPR038208">
    <property type="entry name" value="Tscrpt_reg_Crl_sf"/>
</dbReference>
<dbReference type="NCBIfam" id="NF008217">
    <property type="entry name" value="PRK10984.1"/>
    <property type="match status" value="1"/>
</dbReference>
<dbReference type="Pfam" id="PF07417">
    <property type="entry name" value="Crl"/>
    <property type="match status" value="1"/>
</dbReference>
<keyword id="KW-0002">3D-structure</keyword>
<keyword id="KW-0010">Activator</keyword>
<keyword id="KW-0175">Coiled coil</keyword>
<keyword id="KW-0963">Cytoplasm</keyword>
<keyword id="KW-0903">Direct protein sequencing</keyword>
<keyword id="KW-1185">Reference proteome</keyword>
<keyword id="KW-0804">Transcription</keyword>
<keyword id="KW-0805">Transcription regulation</keyword>
<gene>
    <name type="primary">crl</name>
    <name type="ordered locus">b0240</name>
    <name type="ordered locus">JW0230</name>
</gene>
<organism>
    <name type="scientific">Escherichia coli (strain K12)</name>
    <dbReference type="NCBI Taxonomy" id="83333"/>
    <lineage>
        <taxon>Bacteria</taxon>
        <taxon>Pseudomonadati</taxon>
        <taxon>Pseudomonadota</taxon>
        <taxon>Gammaproteobacteria</taxon>
        <taxon>Enterobacterales</taxon>
        <taxon>Enterobacteriaceae</taxon>
        <taxon>Escherichia</taxon>
    </lineage>
</organism>
<feature type="initiator methionine" description="Removed" evidence="4">
    <location>
        <position position="1"/>
    </location>
</feature>
<feature type="chain" id="PRO_0000079355" description="Sigma factor-binding protein Crl">
    <location>
        <begin position="2"/>
        <end position="133"/>
    </location>
</feature>
<feature type="region of interest" description="Essential for activity">
    <location>
        <begin position="99"/>
        <end position="122"/>
    </location>
</feature>
<feature type="coiled-coil region" evidence="1">
    <location>
        <begin position="90"/>
        <end position="116"/>
    </location>
</feature>
<feature type="sequence conflict" description="In Ref. 1; CAA23606." evidence="5" ref="1">
    <original>P</original>
    <variation>L</variation>
    <location>
        <position position="8"/>
    </location>
</feature>
<feature type="sequence conflict" description="In Ref. 1; CAA23606." evidence="5" ref="1">
    <original>I</original>
    <variation>N</variation>
    <location>
        <position position="13"/>
    </location>
</feature>
<feature type="sequence conflict" description="In Ref. 2 and 3; CAA47646." evidence="5" ref="2 3">
    <original>K</original>
    <variation>E</variation>
    <location>
        <position position="29"/>
    </location>
</feature>
<proteinExistence type="evidence at protein level"/>
<sequence>MTLPSGHPKSRLIKKFTALGPYIREGKCKDNRFFFDCLAVCVNVKPAPEVREFWGWWMELEAQESRFTYSYQFGLFDKAGDWKSVPVKDTEVVERLEHTLREFHEKLRELLTTLNLKLEPADDFRDEPVKLTA</sequence>
<name>CRL_ECOLI</name>
<comment type="function">
    <text evidence="2 3">Binds to the sigma-S subunit of RNA polymerase, activating expression of sigma-S-regulated genes, such as the csgBAC operon encoding the subunits of curli proteins. Stimulates RNA polymerase holoenzyme formation and may bind to several other sigma factors, such as sigma-70 (rpoD) and sigma-32 (rpoH).</text>
</comment>
<comment type="subcellular location">
    <subcellularLocation>
        <location>Cytoplasm</location>
    </subcellularLocation>
</comment>
<comment type="induction">
    <text>Induced at stationary phase, and by low temperatures.</text>
</comment>
<comment type="similarity">
    <text evidence="5">Belongs to the Crl family.</text>
</comment>
<comment type="caution">
    <text evidence="6">A pseudogene in strain MG1655 / ATCC 700926, but not its parent MG1655 / ATCC 47076. In ATCC 700926 IS1I has recently inserted into the gene (PubMed:22081388).</text>
</comment>